<name>IF1_LIMRD</name>
<proteinExistence type="inferred from homology"/>
<gene>
    <name evidence="1" type="primary">infA</name>
    <name type="ordered locus">Lreu_1461</name>
</gene>
<dbReference type="EMBL" id="CP000705">
    <property type="protein sequence ID" value="ABQ83707.1"/>
    <property type="molecule type" value="Genomic_DNA"/>
</dbReference>
<dbReference type="RefSeq" id="WP_003664537.1">
    <property type="nucleotide sequence ID" value="NZ_AZDD01000010.1"/>
</dbReference>
<dbReference type="SMR" id="A5VLI3"/>
<dbReference type="STRING" id="557436.Lreu_1461"/>
<dbReference type="GeneID" id="87979270"/>
<dbReference type="KEGG" id="lre:Lreu_1461"/>
<dbReference type="PATRIC" id="fig|557436.17.peg.162"/>
<dbReference type="eggNOG" id="COG0361">
    <property type="taxonomic scope" value="Bacteria"/>
</dbReference>
<dbReference type="HOGENOM" id="CLU_151267_1_0_9"/>
<dbReference type="Proteomes" id="UP000001991">
    <property type="component" value="Chromosome"/>
</dbReference>
<dbReference type="GO" id="GO:0005829">
    <property type="term" value="C:cytosol"/>
    <property type="evidence" value="ECO:0007669"/>
    <property type="project" value="TreeGrafter"/>
</dbReference>
<dbReference type="GO" id="GO:0043022">
    <property type="term" value="F:ribosome binding"/>
    <property type="evidence" value="ECO:0007669"/>
    <property type="project" value="UniProtKB-UniRule"/>
</dbReference>
<dbReference type="GO" id="GO:0019843">
    <property type="term" value="F:rRNA binding"/>
    <property type="evidence" value="ECO:0007669"/>
    <property type="project" value="UniProtKB-UniRule"/>
</dbReference>
<dbReference type="GO" id="GO:0003743">
    <property type="term" value="F:translation initiation factor activity"/>
    <property type="evidence" value="ECO:0007669"/>
    <property type="project" value="UniProtKB-UniRule"/>
</dbReference>
<dbReference type="CDD" id="cd04451">
    <property type="entry name" value="S1_IF1"/>
    <property type="match status" value="1"/>
</dbReference>
<dbReference type="FunFam" id="2.40.50.140:FF:000002">
    <property type="entry name" value="Translation initiation factor IF-1"/>
    <property type="match status" value="1"/>
</dbReference>
<dbReference type="Gene3D" id="2.40.50.140">
    <property type="entry name" value="Nucleic acid-binding proteins"/>
    <property type="match status" value="1"/>
</dbReference>
<dbReference type="HAMAP" id="MF_00075">
    <property type="entry name" value="IF_1"/>
    <property type="match status" value="1"/>
</dbReference>
<dbReference type="InterPro" id="IPR012340">
    <property type="entry name" value="NA-bd_OB-fold"/>
</dbReference>
<dbReference type="InterPro" id="IPR006196">
    <property type="entry name" value="RNA-binding_domain_S1_IF1"/>
</dbReference>
<dbReference type="InterPro" id="IPR003029">
    <property type="entry name" value="S1_domain"/>
</dbReference>
<dbReference type="InterPro" id="IPR004368">
    <property type="entry name" value="TIF_IF1"/>
</dbReference>
<dbReference type="NCBIfam" id="TIGR00008">
    <property type="entry name" value="infA"/>
    <property type="match status" value="1"/>
</dbReference>
<dbReference type="PANTHER" id="PTHR33370">
    <property type="entry name" value="TRANSLATION INITIATION FACTOR IF-1, CHLOROPLASTIC"/>
    <property type="match status" value="1"/>
</dbReference>
<dbReference type="PANTHER" id="PTHR33370:SF1">
    <property type="entry name" value="TRANSLATION INITIATION FACTOR IF-1, CHLOROPLASTIC"/>
    <property type="match status" value="1"/>
</dbReference>
<dbReference type="Pfam" id="PF01176">
    <property type="entry name" value="eIF-1a"/>
    <property type="match status" value="1"/>
</dbReference>
<dbReference type="SMART" id="SM00316">
    <property type="entry name" value="S1"/>
    <property type="match status" value="1"/>
</dbReference>
<dbReference type="SUPFAM" id="SSF50249">
    <property type="entry name" value="Nucleic acid-binding proteins"/>
    <property type="match status" value="1"/>
</dbReference>
<dbReference type="PROSITE" id="PS50832">
    <property type="entry name" value="S1_IF1_TYPE"/>
    <property type="match status" value="1"/>
</dbReference>
<comment type="function">
    <text evidence="1">One of the essential components for the initiation of protein synthesis. Stabilizes the binding of IF-2 and IF-3 on the 30S subunit to which N-formylmethionyl-tRNA(fMet) subsequently binds. Helps modulate mRNA selection, yielding the 30S pre-initiation complex (PIC). Upon addition of the 50S ribosomal subunit IF-1, IF-2 and IF-3 are released leaving the mature 70S translation initiation complex.</text>
</comment>
<comment type="subunit">
    <text evidence="1">Component of the 30S ribosomal translation pre-initiation complex which assembles on the 30S ribosome in the order IF-2 and IF-3, IF-1 and N-formylmethionyl-tRNA(fMet); mRNA recruitment can occur at any time during PIC assembly.</text>
</comment>
<comment type="subcellular location">
    <subcellularLocation>
        <location evidence="1">Cytoplasm</location>
    </subcellularLocation>
</comment>
<comment type="similarity">
    <text evidence="1">Belongs to the IF-1 family.</text>
</comment>
<sequence>MAKADVIEVEGKVTETLPNAMFKVELENGAEILAHVSGKIRMHYIKILPGDRVKVEMSPYDLTKGRITFRFK</sequence>
<accession>A5VLI3</accession>
<reference key="1">
    <citation type="journal article" date="2011" name="PLoS Genet.">
        <title>The evolution of host specialization in the vertebrate gut symbiont Lactobacillus reuteri.</title>
        <authorList>
            <person name="Frese S.A."/>
            <person name="Benson A.K."/>
            <person name="Tannock G.W."/>
            <person name="Loach D.M."/>
            <person name="Kim J."/>
            <person name="Zhang M."/>
            <person name="Oh P.L."/>
            <person name="Heng N.C."/>
            <person name="Patil P.B."/>
            <person name="Juge N."/>
            <person name="Mackenzie D.A."/>
            <person name="Pearson B.M."/>
            <person name="Lapidus A."/>
            <person name="Dalin E."/>
            <person name="Tice H."/>
            <person name="Goltsman E."/>
            <person name="Land M."/>
            <person name="Hauser L."/>
            <person name="Ivanova N."/>
            <person name="Kyrpides N.C."/>
            <person name="Walter J."/>
        </authorList>
    </citation>
    <scope>NUCLEOTIDE SEQUENCE [LARGE SCALE GENOMIC DNA]</scope>
    <source>
        <strain>DSM 20016</strain>
    </source>
</reference>
<feature type="chain" id="PRO_0000338848" description="Translation initiation factor IF-1">
    <location>
        <begin position="1"/>
        <end position="72"/>
    </location>
</feature>
<feature type="domain" description="S1-like" evidence="1">
    <location>
        <begin position="1"/>
        <end position="72"/>
    </location>
</feature>
<evidence type="ECO:0000255" key="1">
    <source>
        <dbReference type="HAMAP-Rule" id="MF_00075"/>
    </source>
</evidence>
<keyword id="KW-0963">Cytoplasm</keyword>
<keyword id="KW-0396">Initiation factor</keyword>
<keyword id="KW-0648">Protein biosynthesis</keyword>
<keyword id="KW-1185">Reference proteome</keyword>
<keyword id="KW-0694">RNA-binding</keyword>
<keyword id="KW-0699">rRNA-binding</keyword>
<organism>
    <name type="scientific">Limosilactobacillus reuteri (strain DSM 20016)</name>
    <name type="common">Lactobacillus reuteri</name>
    <dbReference type="NCBI Taxonomy" id="557436"/>
    <lineage>
        <taxon>Bacteria</taxon>
        <taxon>Bacillati</taxon>
        <taxon>Bacillota</taxon>
        <taxon>Bacilli</taxon>
        <taxon>Lactobacillales</taxon>
        <taxon>Lactobacillaceae</taxon>
        <taxon>Limosilactobacillus</taxon>
    </lineage>
</organism>
<protein>
    <recommendedName>
        <fullName evidence="1">Translation initiation factor IF-1</fullName>
    </recommendedName>
</protein>